<protein>
    <recommendedName>
        <fullName evidence="1">Probable malate:quinone oxidoreductase</fullName>
        <ecNumber evidence="1">1.1.5.4</ecNumber>
    </recommendedName>
    <alternativeName>
        <fullName evidence="1">MQO</fullName>
    </alternativeName>
    <alternativeName>
        <fullName evidence="1">Malate dehydrogenase [quinone]</fullName>
    </alternativeName>
</protein>
<name>MQO_NEIMF</name>
<organism>
    <name type="scientific">Neisseria meningitidis serogroup C / serotype 2a (strain ATCC 700532 / DSM 15464 / FAM18)</name>
    <dbReference type="NCBI Taxonomy" id="272831"/>
    <lineage>
        <taxon>Bacteria</taxon>
        <taxon>Pseudomonadati</taxon>
        <taxon>Pseudomonadota</taxon>
        <taxon>Betaproteobacteria</taxon>
        <taxon>Neisseriales</taxon>
        <taxon>Neisseriaceae</taxon>
        <taxon>Neisseria</taxon>
    </lineage>
</organism>
<gene>
    <name evidence="1" type="primary">mqo</name>
    <name type="ordered locus">NMC2076</name>
</gene>
<dbReference type="EC" id="1.1.5.4" evidence="1"/>
<dbReference type="EMBL" id="AM421808">
    <property type="protein sequence ID" value="CAM11229.1"/>
    <property type="molecule type" value="Genomic_DNA"/>
</dbReference>
<dbReference type="RefSeq" id="WP_002223200.1">
    <property type="nucleotide sequence ID" value="NC_008767.1"/>
</dbReference>
<dbReference type="SMR" id="A1KWH2"/>
<dbReference type="KEGG" id="nmc:NMC2076"/>
<dbReference type="HOGENOM" id="CLU_028151_0_0_4"/>
<dbReference type="UniPathway" id="UPA00223">
    <property type="reaction ID" value="UER01008"/>
</dbReference>
<dbReference type="Proteomes" id="UP000002286">
    <property type="component" value="Chromosome"/>
</dbReference>
<dbReference type="GO" id="GO:0047545">
    <property type="term" value="F:2-hydroxyglutarate dehydrogenase activity"/>
    <property type="evidence" value="ECO:0007669"/>
    <property type="project" value="TreeGrafter"/>
</dbReference>
<dbReference type="GO" id="GO:0008924">
    <property type="term" value="F:L-malate dehydrogenase (quinone) activity"/>
    <property type="evidence" value="ECO:0007669"/>
    <property type="project" value="UniProtKB-UniRule"/>
</dbReference>
<dbReference type="GO" id="GO:0006099">
    <property type="term" value="P:tricarboxylic acid cycle"/>
    <property type="evidence" value="ECO:0007669"/>
    <property type="project" value="UniProtKB-UniRule"/>
</dbReference>
<dbReference type="Gene3D" id="3.30.9.10">
    <property type="entry name" value="D-Amino Acid Oxidase, subunit A, domain 2"/>
    <property type="match status" value="1"/>
</dbReference>
<dbReference type="Gene3D" id="3.50.50.60">
    <property type="entry name" value="FAD/NAD(P)-binding domain"/>
    <property type="match status" value="1"/>
</dbReference>
<dbReference type="HAMAP" id="MF_00212">
    <property type="entry name" value="MQO"/>
    <property type="match status" value="1"/>
</dbReference>
<dbReference type="InterPro" id="IPR036188">
    <property type="entry name" value="FAD/NAD-bd_sf"/>
</dbReference>
<dbReference type="InterPro" id="IPR006231">
    <property type="entry name" value="MQO"/>
</dbReference>
<dbReference type="NCBIfam" id="TIGR01320">
    <property type="entry name" value="mal_quin_oxido"/>
    <property type="match status" value="1"/>
</dbReference>
<dbReference type="NCBIfam" id="NF003603">
    <property type="entry name" value="PRK05257.1-1"/>
    <property type="match status" value="1"/>
</dbReference>
<dbReference type="NCBIfam" id="NF003605">
    <property type="entry name" value="PRK05257.1-4"/>
    <property type="match status" value="1"/>
</dbReference>
<dbReference type="NCBIfam" id="NF003606">
    <property type="entry name" value="PRK05257.2-1"/>
    <property type="match status" value="1"/>
</dbReference>
<dbReference type="NCBIfam" id="NF003609">
    <property type="entry name" value="PRK05257.2-5"/>
    <property type="match status" value="1"/>
</dbReference>
<dbReference type="NCBIfam" id="NF003610">
    <property type="entry name" value="PRK05257.3-1"/>
    <property type="match status" value="1"/>
</dbReference>
<dbReference type="NCBIfam" id="NF003611">
    <property type="entry name" value="PRK05257.3-2"/>
    <property type="match status" value="1"/>
</dbReference>
<dbReference type="NCBIfam" id="NF009875">
    <property type="entry name" value="PRK13339.1"/>
    <property type="match status" value="1"/>
</dbReference>
<dbReference type="PANTHER" id="PTHR43104">
    <property type="entry name" value="L-2-HYDROXYGLUTARATE DEHYDROGENASE, MITOCHONDRIAL"/>
    <property type="match status" value="1"/>
</dbReference>
<dbReference type="PANTHER" id="PTHR43104:SF2">
    <property type="entry name" value="L-2-HYDROXYGLUTARATE DEHYDROGENASE, MITOCHONDRIAL"/>
    <property type="match status" value="1"/>
</dbReference>
<dbReference type="Pfam" id="PF06039">
    <property type="entry name" value="Mqo"/>
    <property type="match status" value="1"/>
</dbReference>
<dbReference type="SUPFAM" id="SSF51905">
    <property type="entry name" value="FAD/NAD(P)-binding domain"/>
    <property type="match status" value="1"/>
</dbReference>
<evidence type="ECO:0000255" key="1">
    <source>
        <dbReference type="HAMAP-Rule" id="MF_00212"/>
    </source>
</evidence>
<proteinExistence type="inferred from homology"/>
<comment type="catalytic activity">
    <reaction evidence="1">
        <text>(S)-malate + a quinone = a quinol + oxaloacetate</text>
        <dbReference type="Rhea" id="RHEA:46012"/>
        <dbReference type="ChEBI" id="CHEBI:15589"/>
        <dbReference type="ChEBI" id="CHEBI:16452"/>
        <dbReference type="ChEBI" id="CHEBI:24646"/>
        <dbReference type="ChEBI" id="CHEBI:132124"/>
        <dbReference type="EC" id="1.1.5.4"/>
    </reaction>
</comment>
<comment type="cofactor">
    <cofactor evidence="1">
        <name>FAD</name>
        <dbReference type="ChEBI" id="CHEBI:57692"/>
    </cofactor>
</comment>
<comment type="pathway">
    <text evidence="1">Carbohydrate metabolism; tricarboxylic acid cycle; oxaloacetate from (S)-malate (quinone route): step 1/1.</text>
</comment>
<comment type="similarity">
    <text evidence="1">Belongs to the MQO family.</text>
</comment>
<keyword id="KW-0274">FAD</keyword>
<keyword id="KW-0285">Flavoprotein</keyword>
<keyword id="KW-0560">Oxidoreductase</keyword>
<keyword id="KW-0816">Tricarboxylic acid cycle</keyword>
<feature type="chain" id="PRO_1000023811" description="Probable malate:quinone oxidoreductase">
    <location>
        <begin position="1"/>
        <end position="488"/>
    </location>
</feature>
<accession>A1KWH2</accession>
<sequence>MAEATDVVLVGGGIMSATLGVLLKELEPSWEITLIERLEDVALESSNAWNNAGTGHSALCELNYAPLGANGIIDPARALNIAEQFHVSRQFWATLVAEGKLEDNSFINAVPHMSLVMNEDHCSYLQKRYDAFKTQKLFENMEFSTDRNKISDWAPLMMRGRDENQPVAANYSAEGTDVDFGRLTRQMVKYLQGKGVKTEFNRHVEDIKRESDGAWVLKTADTRNPDGQLTLRTRFLFLGAGGGALTLLQKSGIPEGKGYGGFPVSGLFFRNSTPETAEQHNAKVYGQASVGAPPMSVPHLDTRNVDGKRHLMFGPYAGFRSNFLKQGSLMDLPLSIHMDNLYPMLCAGWANMPLTKYLLGELRKTKEERFASLLEYYPEANPDDWELITAGQRVQIIKKDSEKGGVLQFGTEIVAHADGSLAALLGASPGASTAVPLMIRLMHQCFPERAPSWEGRLKELVPGYGIKLNENPERADEIIAYTAKVLDI</sequence>
<reference key="1">
    <citation type="journal article" date="2007" name="PLoS Genet.">
        <title>Meningococcal genetic variation mechanisms viewed through comparative analysis of serogroup C strain FAM18.</title>
        <authorList>
            <person name="Bentley S.D."/>
            <person name="Vernikos G.S."/>
            <person name="Snyder L.A.S."/>
            <person name="Churcher C."/>
            <person name="Arrowsmith C."/>
            <person name="Chillingworth T."/>
            <person name="Cronin A."/>
            <person name="Davis P.H."/>
            <person name="Holroyd N.E."/>
            <person name="Jagels K."/>
            <person name="Maddison M."/>
            <person name="Moule S."/>
            <person name="Rabbinowitsch E."/>
            <person name="Sharp S."/>
            <person name="Unwin L."/>
            <person name="Whitehead S."/>
            <person name="Quail M.A."/>
            <person name="Achtman M."/>
            <person name="Barrell B.G."/>
            <person name="Saunders N.J."/>
            <person name="Parkhill J."/>
        </authorList>
    </citation>
    <scope>NUCLEOTIDE SEQUENCE [LARGE SCALE GENOMIC DNA]</scope>
    <source>
        <strain>ATCC 700532 / DSM 15464 / FAM18</strain>
    </source>
</reference>